<sequence length="98" mass="10431">MKKFLLVAVVGLAGITFANEQLAKQKGCMACHDLKAKKVGPAYADVAKKYAGRKDAVDYLAGKIKKGGSGVWGSVPMPPQNVTDAEAKQLAQWILSIK</sequence>
<evidence type="ECO:0000269" key="1">
    <source>
    </source>
</evidence>
<evidence type="ECO:0000305" key="2"/>
<evidence type="ECO:0007829" key="3">
    <source>
        <dbReference type="PDB" id="1YNR"/>
    </source>
</evidence>
<evidence type="ECO:0007829" key="4">
    <source>
        <dbReference type="PDB" id="5AUR"/>
    </source>
</evidence>
<feature type="signal peptide" evidence="1">
    <location>
        <begin position="1"/>
        <end position="18"/>
    </location>
</feature>
<feature type="chain" id="PRO_0000006531" description="Cytochrome c-552" evidence="1">
    <location>
        <begin position="19"/>
        <end position="98"/>
    </location>
</feature>
<feature type="binding site" description="covalent">
    <location>
        <position position="28"/>
    </location>
    <ligand>
        <name>heme c</name>
        <dbReference type="ChEBI" id="CHEBI:61717"/>
    </ligand>
</feature>
<feature type="binding site" description="covalent">
    <location>
        <position position="31"/>
    </location>
    <ligand>
        <name>heme c</name>
        <dbReference type="ChEBI" id="CHEBI:61717"/>
    </ligand>
</feature>
<feature type="binding site" description="axial binding residue">
    <location>
        <position position="32"/>
    </location>
    <ligand>
        <name>heme c</name>
        <dbReference type="ChEBI" id="CHEBI:61717"/>
    </ligand>
    <ligandPart>
        <name>Fe</name>
        <dbReference type="ChEBI" id="CHEBI:18248"/>
    </ligandPart>
</feature>
<feature type="binding site" description="axial binding residue">
    <location>
        <position position="77"/>
    </location>
    <ligand>
        <name>heme c</name>
        <dbReference type="ChEBI" id="CHEBI:61717"/>
    </ligand>
    <ligandPart>
        <name>Fe</name>
        <dbReference type="ChEBI" id="CHEBI:18248"/>
    </ligandPart>
</feature>
<feature type="helix" evidence="4">
    <location>
        <begin position="20"/>
        <end position="25"/>
    </location>
</feature>
<feature type="helix" evidence="4">
    <location>
        <begin position="28"/>
        <end position="30"/>
    </location>
</feature>
<feature type="strand" evidence="4">
    <location>
        <begin position="34"/>
        <end position="36"/>
    </location>
</feature>
<feature type="strand" evidence="3">
    <location>
        <begin position="38"/>
        <end position="40"/>
    </location>
</feature>
<feature type="helix" evidence="4">
    <location>
        <begin position="43"/>
        <end position="50"/>
    </location>
</feature>
<feature type="helix" evidence="4">
    <location>
        <begin position="56"/>
        <end position="66"/>
    </location>
</feature>
<feature type="strand" evidence="4">
    <location>
        <begin position="70"/>
        <end position="75"/>
    </location>
</feature>
<feature type="helix" evidence="4">
    <location>
        <begin position="84"/>
        <end position="95"/>
    </location>
</feature>
<reference key="1">
    <citation type="journal article" date="1991" name="Eur. J. Biochem.">
        <title>Cloning, nucleotide sequence and expression of the cytochrome c-552 gene from Hydrogenobacter thermophilus.</title>
        <authorList>
            <person name="Sanbongi Y."/>
            <person name="Yang J.H."/>
            <person name="Igarashi Y."/>
            <person name="Kodama T."/>
        </authorList>
    </citation>
    <scope>NUCLEOTIDE SEQUENCE [GENOMIC DNA]</scope>
</reference>
<reference key="2">
    <citation type="journal article" date="2010" name="J. Bacteriol.">
        <title>Complete genome sequence of the thermophilic, obligately chemolithoautotrophic hydrogen-oxidizing bacterium Hydrogenobacter thermophilus TK-6.</title>
        <authorList>
            <person name="Arai H."/>
            <person name="Kanbe H."/>
            <person name="Ishii M."/>
            <person name="Igarashi Y."/>
        </authorList>
    </citation>
    <scope>NUCLEOTIDE SEQUENCE [LARGE SCALE GENOMIC DNA]</scope>
    <source>
        <strain>DSM 6534 / IAM 12695 / TK-6</strain>
    </source>
</reference>
<reference key="3">
    <citation type="journal article" date="2011" name="Stand. Genomic Sci.">
        <title>Complete genome sequence of Hydrogenobacter thermophilus type strain (TK-6).</title>
        <authorList>
            <consortium name="US DOE Joint Genome Institute (JGI-PGF)"/>
            <person name="Zeytun A."/>
            <person name="Sikorski J."/>
            <person name="Nolan M."/>
            <person name="Lapidus A."/>
            <person name="Lucas S."/>
            <person name="Han J."/>
            <person name="Tice H."/>
            <person name="Cheng J.F."/>
            <person name="Tapia R."/>
            <person name="Goodwin L."/>
            <person name="Pitluck S."/>
            <person name="Liolios K."/>
            <person name="Ivanova N."/>
            <person name="Mavromatis K."/>
            <person name="Mikhailova N."/>
            <person name="Ovchinnikova G."/>
            <person name="Pati A."/>
            <person name="Chen A."/>
            <person name="Palaniappan K."/>
            <person name="Ngatchou-Djao O.D."/>
            <person name="Land M."/>
            <person name="Hauser L."/>
            <person name="Jeffries C.D."/>
            <person name="Han C."/>
            <person name="Detter J.C."/>
            <person name="Ubler S."/>
            <person name="Rohde M."/>
            <person name="Tindall B.J."/>
            <person name="Goker M."/>
            <person name="Wirth R."/>
            <person name="Woyke T."/>
            <person name="Bristow J."/>
            <person name="Eisen J.A."/>
            <person name="Markowitz V."/>
            <person name="Hugenholtz P."/>
            <person name="Klenk H.P."/>
            <person name="Kyrpides N.C."/>
        </authorList>
    </citation>
    <scope>NUCLEOTIDE SEQUENCE [LARGE SCALE GENOMIC DNA]</scope>
    <source>
        <strain>DSM 6534 / IAM 12695 / TK-6</strain>
    </source>
</reference>
<reference key="4">
    <citation type="journal article" date="1989" name="J. Bacteriol.">
        <title>Amino acid sequence of cytochrome c-552 from a thermophilic hydrogen-oxidizing bacterium, Hydrogenobacter thermophilus.</title>
        <authorList>
            <person name="Sanbongi Y."/>
            <person name="Ishii M."/>
            <person name="Igarashi Y."/>
            <person name="Kodama T."/>
        </authorList>
    </citation>
    <scope>PROTEIN SEQUENCE OF 19-98</scope>
</reference>
<reference key="5">
    <citation type="journal article" date="1989" name="Biochemistry">
        <title>Thermostability of cytochrome c-552 from the thermophilic hydrogen-oxidizing bacterium Hydrogenobacter thermophilus.</title>
        <authorList>
            <person name="Sanbongi Y."/>
            <person name="Igarashi Y."/>
            <person name="Kodama T."/>
        </authorList>
    </citation>
    <scope>THERMOSTABILITY</scope>
</reference>
<reference key="6">
    <citation type="journal article" date="1998" name="Biochemistry">
        <title>Solution structure of thermostable cytochrome c-552 from Hydrogenobacter thermophilus determined by 1H-NMR spectroscopy.</title>
        <authorList>
            <person name="Hasegawa J."/>
            <person name="Yoshida T."/>
            <person name="Yamazaki T."/>
            <person name="Sambongi Y."/>
            <person name="Yu Y."/>
            <person name="Igarashi Y."/>
            <person name="Kodama T."/>
            <person name="Yamazaki K."/>
            <person name="Kyogoku Y."/>
            <person name="Kobayashi Y."/>
        </authorList>
    </citation>
    <scope>STRUCTURE BY NMR</scope>
</reference>
<protein>
    <recommendedName>
        <fullName>Cytochrome c-552</fullName>
    </recommendedName>
    <alternativeName>
        <fullName>Cytochrome c552</fullName>
    </alternativeName>
</protein>
<name>CY552_HYDTT</name>
<proteinExistence type="evidence at protein level"/>
<comment type="function">
    <text>Reacts with hydrogenase.</text>
</comment>
<comment type="PTM">
    <text>Binds 1 heme c group covalently per subunit.</text>
</comment>
<comment type="similarity">
    <text evidence="2">Belongs to the cytochrome c family.</text>
</comment>
<accession>P15452</accession>
<accession>D3DHZ4</accession>
<accession>E3EUH7</accession>
<organism>
    <name type="scientific">Hydrogenobacter thermophilus (strain DSM 6534 / IAM 12695 / TK-6)</name>
    <dbReference type="NCBI Taxonomy" id="608538"/>
    <lineage>
        <taxon>Bacteria</taxon>
        <taxon>Pseudomonadati</taxon>
        <taxon>Aquificota</taxon>
        <taxon>Aquificia</taxon>
        <taxon>Aquificales</taxon>
        <taxon>Aquificaceae</taxon>
        <taxon>Hydrogenobacter</taxon>
    </lineage>
</organism>
<keyword id="KW-0002">3D-structure</keyword>
<keyword id="KW-0903">Direct protein sequencing</keyword>
<keyword id="KW-0249">Electron transport</keyword>
<keyword id="KW-0349">Heme</keyword>
<keyword id="KW-0408">Iron</keyword>
<keyword id="KW-0479">Metal-binding</keyword>
<keyword id="KW-1185">Reference proteome</keyword>
<keyword id="KW-0732">Signal</keyword>
<keyword id="KW-0813">Transport</keyword>
<gene>
    <name type="ordered locus">HTH_0988</name>
    <name type="ordered locus">Hydth_0984</name>
</gene>
<dbReference type="EMBL" id="X57735">
    <property type="protein sequence ID" value="CAA40902.1"/>
    <property type="molecule type" value="Genomic_DNA"/>
</dbReference>
<dbReference type="EMBL" id="AP011112">
    <property type="protein sequence ID" value="BAI69446.1"/>
    <property type="molecule type" value="Genomic_DNA"/>
</dbReference>
<dbReference type="EMBL" id="CP002221">
    <property type="protein sequence ID" value="ADO45379.1"/>
    <property type="molecule type" value="Genomic_DNA"/>
</dbReference>
<dbReference type="PIR" id="S32485">
    <property type="entry name" value="S32485"/>
</dbReference>
<dbReference type="RefSeq" id="WP_012963626.1">
    <property type="nucleotide sequence ID" value="NC_013799.1"/>
</dbReference>
<dbReference type="PDB" id="1AYG">
    <property type="method" value="NMR"/>
    <property type="chains" value="A=19-98"/>
</dbReference>
<dbReference type="PDB" id="1YNR">
    <property type="method" value="X-ray"/>
    <property type="resolution" value="2.00 A"/>
    <property type="chains" value="A/B/C/D=19-98"/>
</dbReference>
<dbReference type="PDB" id="2AI5">
    <property type="method" value="NMR"/>
    <property type="chains" value="A=19-98"/>
</dbReference>
<dbReference type="PDB" id="3VYM">
    <property type="method" value="X-ray"/>
    <property type="resolution" value="2.00 A"/>
    <property type="chains" value="A=19-98"/>
</dbReference>
<dbReference type="PDB" id="4ZID">
    <property type="method" value="X-ray"/>
    <property type="resolution" value="1.80 A"/>
    <property type="chains" value="A=19-98"/>
</dbReference>
<dbReference type="PDB" id="5AUR">
    <property type="method" value="X-ray"/>
    <property type="resolution" value="1.26 A"/>
    <property type="chains" value="A/C/E/G=19-98"/>
</dbReference>
<dbReference type="PDB" id="5AUS">
    <property type="method" value="X-ray"/>
    <property type="resolution" value="1.30 A"/>
    <property type="chains" value="A/C=19-98"/>
</dbReference>
<dbReference type="PDBsum" id="1AYG"/>
<dbReference type="PDBsum" id="1YNR"/>
<dbReference type="PDBsum" id="2AI5"/>
<dbReference type="PDBsum" id="3VYM"/>
<dbReference type="PDBsum" id="4ZID"/>
<dbReference type="PDBsum" id="5AUR"/>
<dbReference type="PDBsum" id="5AUS"/>
<dbReference type="BMRB" id="P15452"/>
<dbReference type="SMR" id="P15452"/>
<dbReference type="STRING" id="608538.HTH_0988"/>
<dbReference type="KEGG" id="hte:Hydth_0984"/>
<dbReference type="KEGG" id="hth:HTH_0988"/>
<dbReference type="PATRIC" id="fig|608538.5.peg.1004"/>
<dbReference type="eggNOG" id="COG4654">
    <property type="taxonomic scope" value="Bacteria"/>
</dbReference>
<dbReference type="HOGENOM" id="CLU_133112_1_0_0"/>
<dbReference type="OrthoDB" id="9814063at2"/>
<dbReference type="EvolutionaryTrace" id="P15452"/>
<dbReference type="Proteomes" id="UP000002574">
    <property type="component" value="Chromosome"/>
</dbReference>
<dbReference type="GO" id="GO:0009055">
    <property type="term" value="F:electron transfer activity"/>
    <property type="evidence" value="ECO:0007669"/>
    <property type="project" value="InterPro"/>
</dbReference>
<dbReference type="GO" id="GO:0020037">
    <property type="term" value="F:heme binding"/>
    <property type="evidence" value="ECO:0007669"/>
    <property type="project" value="InterPro"/>
</dbReference>
<dbReference type="GO" id="GO:0005506">
    <property type="term" value="F:iron ion binding"/>
    <property type="evidence" value="ECO:0007669"/>
    <property type="project" value="InterPro"/>
</dbReference>
<dbReference type="Gene3D" id="1.10.760.10">
    <property type="entry name" value="Cytochrome c-like domain"/>
    <property type="match status" value="1"/>
</dbReference>
<dbReference type="InterPro" id="IPR009056">
    <property type="entry name" value="Cyt_c-like_dom"/>
</dbReference>
<dbReference type="InterPro" id="IPR036909">
    <property type="entry name" value="Cyt_c-like_dom_sf"/>
</dbReference>
<dbReference type="InterPro" id="IPR002324">
    <property type="entry name" value="Cyt_c_ID"/>
</dbReference>
<dbReference type="Pfam" id="PF00034">
    <property type="entry name" value="Cytochrom_C"/>
    <property type="match status" value="1"/>
</dbReference>
<dbReference type="PRINTS" id="PR00606">
    <property type="entry name" value="CYTCHROMECID"/>
</dbReference>
<dbReference type="SUPFAM" id="SSF46626">
    <property type="entry name" value="Cytochrome c"/>
    <property type="match status" value="1"/>
</dbReference>
<dbReference type="PROSITE" id="PS51007">
    <property type="entry name" value="CYTC"/>
    <property type="match status" value="1"/>
</dbReference>